<gene>
    <name evidence="8" type="primary">SUMO1</name>
    <name evidence="9" type="synonym">SMT3</name>
    <name type="synonym">SUM1</name>
    <name evidence="11" type="ordered locus">At4g26840</name>
    <name evidence="12" type="ORF">F10M23.180</name>
</gene>
<organism>
    <name type="scientific">Arabidopsis thaliana</name>
    <name type="common">Mouse-ear cress</name>
    <dbReference type="NCBI Taxonomy" id="3702"/>
    <lineage>
        <taxon>Eukaryota</taxon>
        <taxon>Viridiplantae</taxon>
        <taxon>Streptophyta</taxon>
        <taxon>Embryophyta</taxon>
        <taxon>Tracheophyta</taxon>
        <taxon>Spermatophyta</taxon>
        <taxon>Magnoliopsida</taxon>
        <taxon>eudicotyledons</taxon>
        <taxon>Gunneridae</taxon>
        <taxon>Pentapetalae</taxon>
        <taxon>rosids</taxon>
        <taxon>malvids</taxon>
        <taxon>Brassicales</taxon>
        <taxon>Brassicaceae</taxon>
        <taxon>Camelineae</taxon>
        <taxon>Arabidopsis</taxon>
    </lineage>
</organism>
<comment type="function">
    <text evidence="5 6 7">Ubiquitin-like protein which can be covalently attached to target lysines as a monomer. Does not seem to be involved in protein degradation and may function as an antagonist of ubiquitin in the degradation process. Required for the massive protein sumoylation in the nucleus induced by heat shock and controlled by SIZ1. Involved in the regulation of the heat stress transcription factor HSFA2 in acquired thermotolerance.</text>
</comment>
<comment type="subunit">
    <text evidence="1 7">Interacts with SAE2, SCE1, SIZ1 and MMS21 (By similarity). Interacts with HSFA2 (PubMed:20521085). Covalently attached to ABI5, FLD, GTE3, HSFA2 and ICE1 (PubMed:20521085).</text>
</comment>
<comment type="interaction">
    <interactant intactId="EBI-15763381">
        <id>P55852</id>
    </interactant>
    <interactant intactId="EBI-1778690">
        <id>Q9SJN0</id>
        <label>ABI5</label>
    </interactant>
    <organismsDiffer>false</organismsDiffer>
    <experiments>2</experiments>
</comment>
<comment type="subcellular location">
    <subcellularLocation>
        <location evidence="7">Nucleus</location>
    </subcellularLocation>
    <subcellularLocation>
        <location evidence="2">Cytoplasm</location>
    </subcellularLocation>
</comment>
<comment type="disruption phenotype">
    <text evidence="6">No visible phenotype.</text>
</comment>
<comment type="miscellaneous">
    <text>Stress conditions rapidly and substantially elevates the amount of SUMO1 and SUMO2 conjugates with a concomitant reduction in the amount of free SUMO proteins. The SUMO conjugation system plays an important function in stress protection and/or repair.</text>
</comment>
<comment type="similarity">
    <text evidence="10">Belongs to the ubiquitin family. SUMO subfamily.</text>
</comment>
<comment type="sequence caution" evidence="10">
    <conflict type="miscellaneous discrepancy">
        <sequence resource="EMBL-CDS" id="CAA67923"/>
    </conflict>
    <text>Sequencing errors.</text>
</comment>
<reference key="1">
    <citation type="journal article" date="1997" name="Genomics">
        <title>SMT3A, a human homologue of the S. cerevisiae SMT3 gene, maps to chromosome 21qter and defines a novel gene family.</title>
        <authorList>
            <person name="Lapenta V."/>
            <person name="Chiurazzi P."/>
            <person name="van der Spek P.J."/>
            <person name="Pizzuti A."/>
            <person name="Hanaoka F."/>
            <person name="Brahe C."/>
        </authorList>
    </citation>
    <scope>NUCLEOTIDE SEQUENCE [MRNA]</scope>
    <scope>SUBCELLULAR LOCATION</scope>
</reference>
<reference key="2">
    <citation type="journal article" date="2003" name="J. Biol. Chem.">
        <title>The small ubiquitin-like modifier (SUMO) protein modification system in Arabidopsis. Accumulation of SUMO1 and -2 conjugates is increased by stress.</title>
        <authorList>
            <person name="Kurepa J."/>
            <person name="Walker J.M."/>
            <person name="Smalle J."/>
            <person name="Gosink M.M."/>
            <person name="Davis S.J."/>
            <person name="Durham T.L."/>
            <person name="Sung D.Y."/>
            <person name="Vierstra R.D."/>
        </authorList>
    </citation>
    <scope>NUCLEOTIDE SEQUENCE [MRNA]</scope>
    <source>
        <strain>cv. Columbia</strain>
    </source>
</reference>
<reference key="3">
    <citation type="journal article" date="1999" name="Nature">
        <title>Sequence and analysis of chromosome 4 of the plant Arabidopsis thaliana.</title>
        <authorList>
            <person name="Mayer K.F.X."/>
            <person name="Schueller C."/>
            <person name="Wambutt R."/>
            <person name="Murphy G."/>
            <person name="Volckaert G."/>
            <person name="Pohl T."/>
            <person name="Duesterhoeft A."/>
            <person name="Stiekema W."/>
            <person name="Entian K.-D."/>
            <person name="Terryn N."/>
            <person name="Harris B."/>
            <person name="Ansorge W."/>
            <person name="Brandt P."/>
            <person name="Grivell L.A."/>
            <person name="Rieger M."/>
            <person name="Weichselgartner M."/>
            <person name="de Simone V."/>
            <person name="Obermaier B."/>
            <person name="Mache R."/>
            <person name="Mueller M."/>
            <person name="Kreis M."/>
            <person name="Delseny M."/>
            <person name="Puigdomenech P."/>
            <person name="Watson M."/>
            <person name="Schmidtheini T."/>
            <person name="Reichert B."/>
            <person name="Portetelle D."/>
            <person name="Perez-Alonso M."/>
            <person name="Boutry M."/>
            <person name="Bancroft I."/>
            <person name="Vos P."/>
            <person name="Hoheisel J."/>
            <person name="Zimmermann W."/>
            <person name="Wedler H."/>
            <person name="Ridley P."/>
            <person name="Langham S.-A."/>
            <person name="McCullagh B."/>
            <person name="Bilham L."/>
            <person name="Robben J."/>
            <person name="van der Schueren J."/>
            <person name="Grymonprez B."/>
            <person name="Chuang Y.-J."/>
            <person name="Vandenbussche F."/>
            <person name="Braeken M."/>
            <person name="Weltjens I."/>
            <person name="Voet M."/>
            <person name="Bastiaens I."/>
            <person name="Aert R."/>
            <person name="Defoor E."/>
            <person name="Weitzenegger T."/>
            <person name="Bothe G."/>
            <person name="Ramsperger U."/>
            <person name="Hilbert H."/>
            <person name="Braun M."/>
            <person name="Holzer E."/>
            <person name="Brandt A."/>
            <person name="Peters S."/>
            <person name="van Staveren M."/>
            <person name="Dirkse W."/>
            <person name="Mooijman P."/>
            <person name="Klein Lankhorst R."/>
            <person name="Rose M."/>
            <person name="Hauf J."/>
            <person name="Koetter P."/>
            <person name="Berneiser S."/>
            <person name="Hempel S."/>
            <person name="Feldpausch M."/>
            <person name="Lamberth S."/>
            <person name="Van den Daele H."/>
            <person name="De Keyser A."/>
            <person name="Buysshaert C."/>
            <person name="Gielen J."/>
            <person name="Villarroel R."/>
            <person name="De Clercq R."/>
            <person name="van Montagu M."/>
            <person name="Rogers J."/>
            <person name="Cronin A."/>
            <person name="Quail M.A."/>
            <person name="Bray-Allen S."/>
            <person name="Clark L."/>
            <person name="Doggett J."/>
            <person name="Hall S."/>
            <person name="Kay M."/>
            <person name="Lennard N."/>
            <person name="McLay K."/>
            <person name="Mayes R."/>
            <person name="Pettett A."/>
            <person name="Rajandream M.A."/>
            <person name="Lyne M."/>
            <person name="Benes V."/>
            <person name="Rechmann S."/>
            <person name="Borkova D."/>
            <person name="Bloecker H."/>
            <person name="Scharfe M."/>
            <person name="Grimm M."/>
            <person name="Loehnert T.-H."/>
            <person name="Dose S."/>
            <person name="de Haan M."/>
            <person name="Maarse A.C."/>
            <person name="Schaefer M."/>
            <person name="Mueller-Auer S."/>
            <person name="Gabel C."/>
            <person name="Fuchs M."/>
            <person name="Fartmann B."/>
            <person name="Granderath K."/>
            <person name="Dauner D."/>
            <person name="Herzl A."/>
            <person name="Neumann S."/>
            <person name="Argiriou A."/>
            <person name="Vitale D."/>
            <person name="Liguori R."/>
            <person name="Piravandi E."/>
            <person name="Massenet O."/>
            <person name="Quigley F."/>
            <person name="Clabauld G."/>
            <person name="Muendlein A."/>
            <person name="Felber R."/>
            <person name="Schnabl S."/>
            <person name="Hiller R."/>
            <person name="Schmidt W."/>
            <person name="Lecharny A."/>
            <person name="Aubourg S."/>
            <person name="Chefdor F."/>
            <person name="Cooke R."/>
            <person name="Berger C."/>
            <person name="Monfort A."/>
            <person name="Casacuberta E."/>
            <person name="Gibbons T."/>
            <person name="Weber N."/>
            <person name="Vandenbol M."/>
            <person name="Bargues M."/>
            <person name="Terol J."/>
            <person name="Torres A."/>
            <person name="Perez-Perez A."/>
            <person name="Purnelle B."/>
            <person name="Bent E."/>
            <person name="Johnson S."/>
            <person name="Tacon D."/>
            <person name="Jesse T."/>
            <person name="Heijnen L."/>
            <person name="Schwarz S."/>
            <person name="Scholler P."/>
            <person name="Heber S."/>
            <person name="Francs P."/>
            <person name="Bielke C."/>
            <person name="Frishman D."/>
            <person name="Haase D."/>
            <person name="Lemcke K."/>
            <person name="Mewes H.-W."/>
            <person name="Stocker S."/>
            <person name="Zaccaria P."/>
            <person name="Bevan M."/>
            <person name="Wilson R.K."/>
            <person name="de la Bastide M."/>
            <person name="Habermann K."/>
            <person name="Parnell L."/>
            <person name="Dedhia N."/>
            <person name="Gnoj L."/>
            <person name="Schutz K."/>
            <person name="Huang E."/>
            <person name="Spiegel L."/>
            <person name="Sekhon M."/>
            <person name="Murray J."/>
            <person name="Sheet P."/>
            <person name="Cordes M."/>
            <person name="Abu-Threideh J."/>
            <person name="Stoneking T."/>
            <person name="Kalicki J."/>
            <person name="Graves T."/>
            <person name="Harmon G."/>
            <person name="Edwards J."/>
            <person name="Latreille P."/>
            <person name="Courtney L."/>
            <person name="Cloud J."/>
            <person name="Abbott A."/>
            <person name="Scott K."/>
            <person name="Johnson D."/>
            <person name="Minx P."/>
            <person name="Bentley D."/>
            <person name="Fulton B."/>
            <person name="Miller N."/>
            <person name="Greco T."/>
            <person name="Kemp K."/>
            <person name="Kramer J."/>
            <person name="Fulton L."/>
            <person name="Mardis E."/>
            <person name="Dante M."/>
            <person name="Pepin K."/>
            <person name="Hillier L.W."/>
            <person name="Nelson J."/>
            <person name="Spieth J."/>
            <person name="Ryan E."/>
            <person name="Andrews S."/>
            <person name="Geisel C."/>
            <person name="Layman D."/>
            <person name="Du H."/>
            <person name="Ali J."/>
            <person name="Berghoff A."/>
            <person name="Jones K."/>
            <person name="Drone K."/>
            <person name="Cotton M."/>
            <person name="Joshu C."/>
            <person name="Antonoiu B."/>
            <person name="Zidanic M."/>
            <person name="Strong C."/>
            <person name="Sun H."/>
            <person name="Lamar B."/>
            <person name="Yordan C."/>
            <person name="Ma P."/>
            <person name="Zhong J."/>
            <person name="Preston R."/>
            <person name="Vil D."/>
            <person name="Shekher M."/>
            <person name="Matero A."/>
            <person name="Shah R."/>
            <person name="Swaby I.K."/>
            <person name="O'Shaughnessy A."/>
            <person name="Rodriguez M."/>
            <person name="Hoffman J."/>
            <person name="Till S."/>
            <person name="Granat S."/>
            <person name="Shohdy N."/>
            <person name="Hasegawa A."/>
            <person name="Hameed A."/>
            <person name="Lodhi M."/>
            <person name="Johnson A."/>
            <person name="Chen E."/>
            <person name="Marra M.A."/>
            <person name="Martienssen R."/>
            <person name="McCombie W.R."/>
        </authorList>
    </citation>
    <scope>NUCLEOTIDE SEQUENCE [LARGE SCALE GENOMIC DNA]</scope>
    <source>
        <strain>cv. Columbia</strain>
    </source>
</reference>
<reference key="4">
    <citation type="journal article" date="2017" name="Plant J.">
        <title>Araport11: a complete reannotation of the Arabidopsis thaliana reference genome.</title>
        <authorList>
            <person name="Cheng C.Y."/>
            <person name="Krishnakumar V."/>
            <person name="Chan A.P."/>
            <person name="Thibaud-Nissen F."/>
            <person name="Schobel S."/>
            <person name="Town C.D."/>
        </authorList>
    </citation>
    <scope>GENOME REANNOTATION</scope>
    <source>
        <strain>cv. Columbia</strain>
    </source>
</reference>
<reference key="5">
    <citation type="journal article" date="2003" name="Science">
        <title>Empirical analysis of transcriptional activity in the Arabidopsis genome.</title>
        <authorList>
            <person name="Yamada K."/>
            <person name="Lim J."/>
            <person name="Dale J.M."/>
            <person name="Chen H."/>
            <person name="Shinn P."/>
            <person name="Palm C.J."/>
            <person name="Southwick A.M."/>
            <person name="Wu H.C."/>
            <person name="Kim C.J."/>
            <person name="Nguyen M."/>
            <person name="Pham P.K."/>
            <person name="Cheuk R.F."/>
            <person name="Karlin-Newmann G."/>
            <person name="Liu S.X."/>
            <person name="Lam B."/>
            <person name="Sakano H."/>
            <person name="Wu T."/>
            <person name="Yu G."/>
            <person name="Miranda M."/>
            <person name="Quach H.L."/>
            <person name="Tripp M."/>
            <person name="Chang C.H."/>
            <person name="Lee J.M."/>
            <person name="Toriumi M.J."/>
            <person name="Chan M.M."/>
            <person name="Tang C.C."/>
            <person name="Onodera C.S."/>
            <person name="Deng J.M."/>
            <person name="Akiyama K."/>
            <person name="Ansari Y."/>
            <person name="Arakawa T."/>
            <person name="Banh J."/>
            <person name="Banno F."/>
            <person name="Bowser L."/>
            <person name="Brooks S.Y."/>
            <person name="Carninci P."/>
            <person name="Chao Q."/>
            <person name="Choy N."/>
            <person name="Enju A."/>
            <person name="Goldsmith A.D."/>
            <person name="Gurjal M."/>
            <person name="Hansen N.F."/>
            <person name="Hayashizaki Y."/>
            <person name="Johnson-Hopson C."/>
            <person name="Hsuan V.W."/>
            <person name="Iida K."/>
            <person name="Karnes M."/>
            <person name="Khan S."/>
            <person name="Koesema E."/>
            <person name="Ishida J."/>
            <person name="Jiang P.X."/>
            <person name="Jones T."/>
            <person name="Kawai J."/>
            <person name="Kamiya A."/>
            <person name="Meyers C."/>
            <person name="Nakajima M."/>
            <person name="Narusaka M."/>
            <person name="Seki M."/>
            <person name="Sakurai T."/>
            <person name="Satou M."/>
            <person name="Tamse R."/>
            <person name="Vaysberg M."/>
            <person name="Wallender E.K."/>
            <person name="Wong C."/>
            <person name="Yamamura Y."/>
            <person name="Yuan S."/>
            <person name="Shinozaki K."/>
            <person name="Davis R.W."/>
            <person name="Theologis A."/>
            <person name="Ecker J.R."/>
        </authorList>
    </citation>
    <scope>NUCLEOTIDE SEQUENCE [LARGE SCALE MRNA]</scope>
    <source>
        <strain>cv. Columbia</strain>
    </source>
</reference>
<reference key="6">
    <citation type="submission" date="2002-03" db="EMBL/GenBank/DDBJ databases">
        <title>Full-length cDNA from Arabidopsis thaliana.</title>
        <authorList>
            <person name="Brover V.V."/>
            <person name="Troukhan M.E."/>
            <person name="Alexandrov N.A."/>
            <person name="Lu Y.-P."/>
            <person name="Flavell R.B."/>
            <person name="Feldmann K.A."/>
        </authorList>
    </citation>
    <scope>NUCLEOTIDE SEQUENCE [LARGE SCALE MRNA]</scope>
</reference>
<reference key="7">
    <citation type="journal article" date="2006" name="Plant Physiol.">
        <title>SIZ1 small ubiquitin-like modifier E3 ligase facilitates basal thermotolerance in Arabidopsis independent of salicylic acid.</title>
        <authorList>
            <person name="Yoo C.Y."/>
            <person name="Miura K."/>
            <person name="Jin J.B."/>
            <person name="Lee J."/>
            <person name="Park H.C."/>
            <person name="Salt D.E."/>
            <person name="Yun D.J."/>
            <person name="Bressan R.A."/>
            <person name="Hasegawa P.M."/>
        </authorList>
    </citation>
    <scope>FUNCTION</scope>
</reference>
<reference key="8">
    <citation type="journal article" date="2007" name="Plant Physiol.">
        <title>Genetic analysis of SUMOylation in Arabidopsis: conjugation of SUMO1 and SUMO2 to nuclear proteins is essential.</title>
        <authorList>
            <person name="Saracco S.A."/>
            <person name="Miller M.J."/>
            <person name="Kurepa J."/>
            <person name="Vierstra R.D."/>
        </authorList>
    </citation>
    <scope>FUNCTION</scope>
    <scope>DISRUPTION PHENOTYPE</scope>
</reference>
<reference key="9">
    <citation type="journal article" date="2010" name="Plant Mol. Biol.">
        <title>Sumoylation of Arabidopsis heat shock factor A2 (HsfA2) modifies its activity during acquired thermotholerance.</title>
        <authorList>
            <person name="Cohen-Peer R."/>
            <person name="Schuster S."/>
            <person name="Meiri D."/>
            <person name="Breiman A."/>
            <person name="Avni A."/>
        </authorList>
    </citation>
    <scope>FUNCTION</scope>
    <scope>INTERACTION WITH HSFA2</scope>
    <scope>SUBCELLULAR LOCATION</scope>
    <source>
        <strain>cv. Columbia</strain>
    </source>
</reference>
<evidence type="ECO:0000250" key="1"/>
<evidence type="ECO:0000250" key="2">
    <source>
        <dbReference type="UniProtKB" id="Q9FLP6"/>
    </source>
</evidence>
<evidence type="ECO:0000255" key="3">
    <source>
        <dbReference type="PROSITE-ProRule" id="PRU00214"/>
    </source>
</evidence>
<evidence type="ECO:0000256" key="4">
    <source>
        <dbReference type="SAM" id="MobiDB-lite"/>
    </source>
</evidence>
<evidence type="ECO:0000269" key="5">
    <source>
    </source>
</evidence>
<evidence type="ECO:0000269" key="6">
    <source>
    </source>
</evidence>
<evidence type="ECO:0000269" key="7">
    <source>
    </source>
</evidence>
<evidence type="ECO:0000303" key="8">
    <source>
    </source>
</evidence>
<evidence type="ECO:0000303" key="9">
    <source>
    </source>
</evidence>
<evidence type="ECO:0000305" key="10"/>
<evidence type="ECO:0000312" key="11">
    <source>
        <dbReference type="Araport" id="AT4G26840"/>
    </source>
</evidence>
<evidence type="ECO:0000312" key="12">
    <source>
        <dbReference type="EMBL" id="CAB36530.1"/>
    </source>
</evidence>
<sequence>MSANQEEDKKPGDGGAHINLKVKGQDGNEVFFRIKRSTQLKKLMNAYCDRQSVDMNSIAFLFDGRRLRAEQTPDELDMEDGDEIDAMLHQTGGSGGGATA</sequence>
<name>SUMO1_ARATH</name>
<protein>
    <recommendedName>
        <fullName evidence="8">Small ubiquitin-related modifier 1</fullName>
        <shortName evidence="8">AtSUMO1</shortName>
    </recommendedName>
    <alternativeName>
        <fullName evidence="9">Ubiquitin-like protein SMT3</fullName>
    </alternativeName>
</protein>
<proteinExistence type="evidence at protein level"/>
<dbReference type="EMBL" id="X99609">
    <property type="protein sequence ID" value="CAA67923.1"/>
    <property type="status" value="ALT_SEQ"/>
    <property type="molecule type" value="mRNA"/>
</dbReference>
<dbReference type="EMBL" id="AF510519">
    <property type="protein sequence ID" value="AAN03845.1"/>
    <property type="molecule type" value="mRNA"/>
</dbReference>
<dbReference type="EMBL" id="AL035440">
    <property type="protein sequence ID" value="CAB36530.1"/>
    <property type="molecule type" value="Genomic_DNA"/>
</dbReference>
<dbReference type="EMBL" id="AL161565">
    <property type="protein sequence ID" value="CAB79539.1"/>
    <property type="molecule type" value="Genomic_DNA"/>
</dbReference>
<dbReference type="EMBL" id="CP002687">
    <property type="protein sequence ID" value="AEE85259.1"/>
    <property type="molecule type" value="Genomic_DNA"/>
</dbReference>
<dbReference type="EMBL" id="AY072368">
    <property type="protein sequence ID" value="AAL62360.1"/>
    <property type="molecule type" value="mRNA"/>
</dbReference>
<dbReference type="EMBL" id="BT008437">
    <property type="protein sequence ID" value="AAP37796.1"/>
    <property type="molecule type" value="mRNA"/>
</dbReference>
<dbReference type="EMBL" id="AY086914">
    <property type="protein sequence ID" value="AAM64478.1"/>
    <property type="molecule type" value="mRNA"/>
</dbReference>
<dbReference type="PIR" id="T04807">
    <property type="entry name" value="T04807"/>
</dbReference>
<dbReference type="RefSeq" id="NP_194414.1">
    <property type="nucleotide sequence ID" value="NM_118818.4"/>
</dbReference>
<dbReference type="SMR" id="P55852"/>
<dbReference type="BioGRID" id="14078">
    <property type="interactions" value="145"/>
</dbReference>
<dbReference type="DIP" id="DIP-48780N"/>
<dbReference type="FunCoup" id="P55852">
    <property type="interactions" value="4020"/>
</dbReference>
<dbReference type="IntAct" id="P55852">
    <property type="interactions" value="1"/>
</dbReference>
<dbReference type="STRING" id="3702.P55852"/>
<dbReference type="PaxDb" id="3702-AT4G26840.1"/>
<dbReference type="ProteomicsDB" id="228433"/>
<dbReference type="EnsemblPlants" id="AT4G26840.1">
    <property type="protein sequence ID" value="AT4G26840.1"/>
    <property type="gene ID" value="AT4G26840"/>
</dbReference>
<dbReference type="GeneID" id="828791"/>
<dbReference type="Gramene" id="AT4G26840.1">
    <property type="protein sequence ID" value="AT4G26840.1"/>
    <property type="gene ID" value="AT4G26840"/>
</dbReference>
<dbReference type="KEGG" id="ath:AT4G26840"/>
<dbReference type="Araport" id="AT4G26840"/>
<dbReference type="TAIR" id="AT4G26840">
    <property type="gene designation" value="SUMO1"/>
</dbReference>
<dbReference type="eggNOG" id="KOG1769">
    <property type="taxonomic scope" value="Eukaryota"/>
</dbReference>
<dbReference type="HOGENOM" id="CLU_148322_4_2_1"/>
<dbReference type="InParanoid" id="P55852"/>
<dbReference type="OMA" id="SKMMNAY"/>
<dbReference type="OrthoDB" id="442921at2759"/>
<dbReference type="PhylomeDB" id="P55852"/>
<dbReference type="PRO" id="PR:P55852"/>
<dbReference type="Proteomes" id="UP000006548">
    <property type="component" value="Chromosome 4"/>
</dbReference>
<dbReference type="ExpressionAtlas" id="P55852">
    <property type="expression patterns" value="baseline and differential"/>
</dbReference>
<dbReference type="GO" id="GO:0005737">
    <property type="term" value="C:cytoplasm"/>
    <property type="evidence" value="ECO:0000314"/>
    <property type="project" value="TAIR"/>
</dbReference>
<dbReference type="GO" id="GO:0005829">
    <property type="term" value="C:cytosol"/>
    <property type="evidence" value="ECO:0007005"/>
    <property type="project" value="TAIR"/>
</dbReference>
<dbReference type="GO" id="GO:0005634">
    <property type="term" value="C:nucleus"/>
    <property type="evidence" value="ECO:0000314"/>
    <property type="project" value="UniProtKB"/>
</dbReference>
<dbReference type="GO" id="GO:0031386">
    <property type="term" value="F:protein tag activity"/>
    <property type="evidence" value="ECO:0000314"/>
    <property type="project" value="TAIR"/>
</dbReference>
<dbReference type="GO" id="GO:0010286">
    <property type="term" value="P:heat acclimation"/>
    <property type="evidence" value="ECO:0000315"/>
    <property type="project" value="UniProtKB"/>
</dbReference>
<dbReference type="GO" id="GO:0043433">
    <property type="term" value="P:negative regulation of DNA-binding transcription factor activity"/>
    <property type="evidence" value="ECO:0000315"/>
    <property type="project" value="UniProtKB"/>
</dbReference>
<dbReference type="GO" id="GO:0016925">
    <property type="term" value="P:protein sumoylation"/>
    <property type="evidence" value="ECO:0000314"/>
    <property type="project" value="TAIR"/>
</dbReference>
<dbReference type="GO" id="GO:0009408">
    <property type="term" value="P:response to heat"/>
    <property type="evidence" value="ECO:0000270"/>
    <property type="project" value="TAIR"/>
</dbReference>
<dbReference type="CDD" id="cd16116">
    <property type="entry name" value="Ubl_Smt3_like"/>
    <property type="match status" value="1"/>
</dbReference>
<dbReference type="FunFam" id="3.10.20.90:FF:000171">
    <property type="entry name" value="Small ubiquitin-related modifier"/>
    <property type="match status" value="1"/>
</dbReference>
<dbReference type="Gene3D" id="3.10.20.90">
    <property type="entry name" value="Phosphatidylinositol 3-kinase Catalytic Subunit, Chain A, domain 1"/>
    <property type="match status" value="1"/>
</dbReference>
<dbReference type="InterPro" id="IPR022617">
    <property type="entry name" value="Rad60/SUMO-like_dom"/>
</dbReference>
<dbReference type="InterPro" id="IPR000626">
    <property type="entry name" value="Ubiquitin-like_dom"/>
</dbReference>
<dbReference type="InterPro" id="IPR029071">
    <property type="entry name" value="Ubiquitin-like_domsf"/>
</dbReference>
<dbReference type="PANTHER" id="PTHR10562">
    <property type="entry name" value="SMALL UBIQUITIN-RELATED MODIFIER"/>
    <property type="match status" value="1"/>
</dbReference>
<dbReference type="Pfam" id="PF11976">
    <property type="entry name" value="Rad60-SLD"/>
    <property type="match status" value="1"/>
</dbReference>
<dbReference type="SMART" id="SM00213">
    <property type="entry name" value="UBQ"/>
    <property type="match status" value="1"/>
</dbReference>
<dbReference type="SUPFAM" id="SSF54236">
    <property type="entry name" value="Ubiquitin-like"/>
    <property type="match status" value="1"/>
</dbReference>
<dbReference type="PROSITE" id="PS50053">
    <property type="entry name" value="UBIQUITIN_2"/>
    <property type="match status" value="1"/>
</dbReference>
<feature type="chain" id="PRO_0000114891" description="Small ubiquitin-related modifier 1">
    <location>
        <begin position="1"/>
        <end position="100"/>
    </location>
</feature>
<feature type="domain" description="Ubiquitin-like" evidence="3">
    <location>
        <begin position="16"/>
        <end position="93"/>
    </location>
</feature>
<feature type="region of interest" description="Disordered" evidence="4">
    <location>
        <begin position="1"/>
        <end position="21"/>
    </location>
</feature>
<feature type="compositionally biased region" description="Basic and acidic residues" evidence="4">
    <location>
        <begin position="1"/>
        <end position="12"/>
    </location>
</feature>
<feature type="cross-link" description="Glycyl lysine isopeptide (Gly-Lys) (interchain with K-? in acceptor proteins)">
    <location>
        <position position="93"/>
    </location>
</feature>
<keyword id="KW-0963">Cytoplasm</keyword>
<keyword id="KW-1017">Isopeptide bond</keyword>
<keyword id="KW-0539">Nucleus</keyword>
<keyword id="KW-1185">Reference proteome</keyword>
<keyword id="KW-0833">Ubl conjugation pathway</keyword>
<accession>P55852</accession>
<accession>Q547B9</accession>
<accession>Q9SZ24</accession>